<dbReference type="EMBL" id="X66095">
    <property type="protein sequence ID" value="CAA46889.1"/>
    <property type="molecule type" value="Genomic_DNA"/>
</dbReference>
<dbReference type="EMBL" id="X66096">
    <property type="protein sequence ID" value="CAA46890.1"/>
    <property type="molecule type" value="mRNA"/>
</dbReference>
<dbReference type="EMBL" id="AE014134">
    <property type="protein sequence ID" value="AAF51058.1"/>
    <property type="molecule type" value="Genomic_DNA"/>
</dbReference>
<dbReference type="RefSeq" id="NP_476730.1">
    <property type="nucleotide sequence ID" value="NM_057382.3"/>
</dbReference>
<dbReference type="SMR" id="P32030"/>
<dbReference type="BioGRID" id="59810">
    <property type="interactions" value="10"/>
</dbReference>
<dbReference type="IntAct" id="P32030">
    <property type="interactions" value="6"/>
</dbReference>
<dbReference type="STRING" id="7227.FBpp0077188"/>
<dbReference type="PaxDb" id="7227-FBpp0077188"/>
<dbReference type="DNASU" id="33607"/>
<dbReference type="GeneID" id="33607"/>
<dbReference type="KEGG" id="dme:Dmel_CG16738"/>
<dbReference type="AGR" id="FB:FBgn0003430"/>
<dbReference type="CTD" id="33607"/>
<dbReference type="FlyBase" id="FBgn0003430">
    <property type="gene designation" value="slp1"/>
</dbReference>
<dbReference type="VEuPathDB" id="VectorBase:FBgn0003430"/>
<dbReference type="eggNOG" id="KOG2294">
    <property type="taxonomic scope" value="Eukaryota"/>
</dbReference>
<dbReference type="HOGENOM" id="CLU_809570_0_0_1"/>
<dbReference type="InParanoid" id="P32030"/>
<dbReference type="OrthoDB" id="9926427at2759"/>
<dbReference type="SignaLink" id="P32030"/>
<dbReference type="BioGRID-ORCS" id="33607">
    <property type="hits" value="0 hits in 3 CRISPR screens"/>
</dbReference>
<dbReference type="GenomeRNAi" id="33607"/>
<dbReference type="PRO" id="PR:P32030"/>
<dbReference type="Proteomes" id="UP000000803">
    <property type="component" value="Chromosome 2L"/>
</dbReference>
<dbReference type="ExpressionAtlas" id="P32030">
    <property type="expression patterns" value="baseline and differential"/>
</dbReference>
<dbReference type="GO" id="GO:0005634">
    <property type="term" value="C:nucleus"/>
    <property type="evidence" value="ECO:0000314"/>
    <property type="project" value="FlyBase"/>
</dbReference>
<dbReference type="GO" id="GO:0000981">
    <property type="term" value="F:DNA-binding transcription factor activity, RNA polymerase II-specific"/>
    <property type="evidence" value="ECO:0000314"/>
    <property type="project" value="FlyBase"/>
</dbReference>
<dbReference type="GO" id="GO:0000978">
    <property type="term" value="F:RNA polymerase II cis-regulatory region sequence-specific DNA binding"/>
    <property type="evidence" value="ECO:0000318"/>
    <property type="project" value="GO_Central"/>
</dbReference>
<dbReference type="GO" id="GO:0000977">
    <property type="term" value="F:RNA polymerase II transcription regulatory region sequence-specific DNA binding"/>
    <property type="evidence" value="ECO:0000314"/>
    <property type="project" value="FlyBase"/>
</dbReference>
<dbReference type="GO" id="GO:0009653">
    <property type="term" value="P:anatomical structure morphogenesis"/>
    <property type="evidence" value="ECO:0000318"/>
    <property type="project" value="GO_Central"/>
</dbReference>
<dbReference type="GO" id="GO:0008595">
    <property type="term" value="P:anterior/posterior axis specification, embryo"/>
    <property type="evidence" value="ECO:0000303"/>
    <property type="project" value="FlyBase"/>
</dbReference>
<dbReference type="GO" id="GO:0007350">
    <property type="term" value="P:blastoderm segmentation"/>
    <property type="evidence" value="ECO:0000304"/>
    <property type="project" value="FlyBase"/>
</dbReference>
<dbReference type="GO" id="GO:0030154">
    <property type="term" value="P:cell differentiation"/>
    <property type="evidence" value="ECO:0000318"/>
    <property type="project" value="GO_Central"/>
</dbReference>
<dbReference type="GO" id="GO:0007507">
    <property type="term" value="P:heart development"/>
    <property type="evidence" value="ECO:0000304"/>
    <property type="project" value="FlyBase"/>
</dbReference>
<dbReference type="GO" id="GO:0060914">
    <property type="term" value="P:heart formation"/>
    <property type="evidence" value="ECO:0000315"/>
    <property type="project" value="FlyBase"/>
</dbReference>
<dbReference type="GO" id="GO:0001707">
    <property type="term" value="P:mesoderm formation"/>
    <property type="evidence" value="ECO:0000304"/>
    <property type="project" value="FlyBase"/>
</dbReference>
<dbReference type="GO" id="GO:0000122">
    <property type="term" value="P:negative regulation of transcription by RNA polymerase II"/>
    <property type="evidence" value="ECO:0000314"/>
    <property type="project" value="FlyBase"/>
</dbReference>
<dbReference type="GO" id="GO:0007366">
    <property type="term" value="P:periodic partitioning by pair rule gene"/>
    <property type="evidence" value="ECO:0007669"/>
    <property type="project" value="UniProtKB-KW"/>
</dbReference>
<dbReference type="GO" id="GO:0010468">
    <property type="term" value="P:regulation of gene expression"/>
    <property type="evidence" value="ECO:0000315"/>
    <property type="project" value="FlyBase"/>
</dbReference>
<dbReference type="GO" id="GO:0006357">
    <property type="term" value="P:regulation of transcription by RNA polymerase II"/>
    <property type="evidence" value="ECO:0000318"/>
    <property type="project" value="GO_Central"/>
</dbReference>
<dbReference type="GO" id="GO:0007380">
    <property type="term" value="P:specification of segmental identity, head"/>
    <property type="evidence" value="ECO:0000315"/>
    <property type="project" value="FlyBase"/>
</dbReference>
<dbReference type="FunFam" id="1.10.10.10:FF:000135">
    <property type="entry name" value="forkhead box protein G1"/>
    <property type="match status" value="1"/>
</dbReference>
<dbReference type="Gene3D" id="1.10.10.10">
    <property type="entry name" value="Winged helix-like DNA-binding domain superfamily/Winged helix DNA-binding domain"/>
    <property type="match status" value="1"/>
</dbReference>
<dbReference type="InterPro" id="IPR001766">
    <property type="entry name" value="Fork_head_dom"/>
</dbReference>
<dbReference type="InterPro" id="IPR047208">
    <property type="entry name" value="FOXG1"/>
</dbReference>
<dbReference type="InterPro" id="IPR018122">
    <property type="entry name" value="TF_fork_head_CS_1"/>
</dbReference>
<dbReference type="InterPro" id="IPR030456">
    <property type="entry name" value="TF_fork_head_CS_2"/>
</dbReference>
<dbReference type="InterPro" id="IPR036388">
    <property type="entry name" value="WH-like_DNA-bd_sf"/>
</dbReference>
<dbReference type="InterPro" id="IPR036390">
    <property type="entry name" value="WH_DNA-bd_sf"/>
</dbReference>
<dbReference type="PANTHER" id="PTHR46617">
    <property type="entry name" value="FORKHEAD BOX PROTEIN G1"/>
    <property type="match status" value="1"/>
</dbReference>
<dbReference type="PANTHER" id="PTHR46617:SF3">
    <property type="entry name" value="FORKHEAD BOX PROTEIN G1"/>
    <property type="match status" value="1"/>
</dbReference>
<dbReference type="Pfam" id="PF00250">
    <property type="entry name" value="Forkhead"/>
    <property type="match status" value="1"/>
</dbReference>
<dbReference type="PRINTS" id="PR00053">
    <property type="entry name" value="FORKHEAD"/>
</dbReference>
<dbReference type="SMART" id="SM00339">
    <property type="entry name" value="FH"/>
    <property type="match status" value="1"/>
</dbReference>
<dbReference type="SUPFAM" id="SSF46785">
    <property type="entry name" value="Winged helix' DNA-binding domain"/>
    <property type="match status" value="1"/>
</dbReference>
<dbReference type="PROSITE" id="PS00657">
    <property type="entry name" value="FORK_HEAD_1"/>
    <property type="match status" value="1"/>
</dbReference>
<dbReference type="PROSITE" id="PS00658">
    <property type="entry name" value="FORK_HEAD_2"/>
    <property type="match status" value="1"/>
</dbReference>
<dbReference type="PROSITE" id="PS50039">
    <property type="entry name" value="FORK_HEAD_3"/>
    <property type="match status" value="1"/>
</dbReference>
<reference key="1">
    <citation type="journal article" date="1992" name="Genes Dev.">
        <title>The Drosophila sloppy paired locus encodes two proteins involved in segmentation that show homology to mammalian transcription factors.</title>
        <authorList>
            <person name="Grossniklaus U."/>
            <person name="Pearson R.K."/>
            <person name="Gehring W.J."/>
        </authorList>
    </citation>
    <scope>NUCLEOTIDE SEQUENCE [GENOMIC DNA]</scope>
    <source>
        <strain>Canton-S</strain>
        <strain>Oregon-R</strain>
    </source>
</reference>
<reference key="2">
    <citation type="journal article" date="2000" name="Science">
        <title>The genome sequence of Drosophila melanogaster.</title>
        <authorList>
            <person name="Adams M.D."/>
            <person name="Celniker S.E."/>
            <person name="Holt R.A."/>
            <person name="Evans C.A."/>
            <person name="Gocayne J.D."/>
            <person name="Amanatides P.G."/>
            <person name="Scherer S.E."/>
            <person name="Li P.W."/>
            <person name="Hoskins R.A."/>
            <person name="Galle R.F."/>
            <person name="George R.A."/>
            <person name="Lewis S.E."/>
            <person name="Richards S."/>
            <person name="Ashburner M."/>
            <person name="Henderson S.N."/>
            <person name="Sutton G.G."/>
            <person name="Wortman J.R."/>
            <person name="Yandell M.D."/>
            <person name="Zhang Q."/>
            <person name="Chen L.X."/>
            <person name="Brandon R.C."/>
            <person name="Rogers Y.-H.C."/>
            <person name="Blazej R.G."/>
            <person name="Champe M."/>
            <person name="Pfeiffer B.D."/>
            <person name="Wan K.H."/>
            <person name="Doyle C."/>
            <person name="Baxter E.G."/>
            <person name="Helt G."/>
            <person name="Nelson C.R."/>
            <person name="Miklos G.L.G."/>
            <person name="Abril J.F."/>
            <person name="Agbayani A."/>
            <person name="An H.-J."/>
            <person name="Andrews-Pfannkoch C."/>
            <person name="Baldwin D."/>
            <person name="Ballew R.M."/>
            <person name="Basu A."/>
            <person name="Baxendale J."/>
            <person name="Bayraktaroglu L."/>
            <person name="Beasley E.M."/>
            <person name="Beeson K.Y."/>
            <person name="Benos P.V."/>
            <person name="Berman B.P."/>
            <person name="Bhandari D."/>
            <person name="Bolshakov S."/>
            <person name="Borkova D."/>
            <person name="Botchan M.R."/>
            <person name="Bouck J."/>
            <person name="Brokstein P."/>
            <person name="Brottier P."/>
            <person name="Burtis K.C."/>
            <person name="Busam D.A."/>
            <person name="Butler H."/>
            <person name="Cadieu E."/>
            <person name="Center A."/>
            <person name="Chandra I."/>
            <person name="Cherry J.M."/>
            <person name="Cawley S."/>
            <person name="Dahlke C."/>
            <person name="Davenport L.B."/>
            <person name="Davies P."/>
            <person name="de Pablos B."/>
            <person name="Delcher A."/>
            <person name="Deng Z."/>
            <person name="Mays A.D."/>
            <person name="Dew I."/>
            <person name="Dietz S.M."/>
            <person name="Dodson K."/>
            <person name="Doup L.E."/>
            <person name="Downes M."/>
            <person name="Dugan-Rocha S."/>
            <person name="Dunkov B.C."/>
            <person name="Dunn P."/>
            <person name="Durbin K.J."/>
            <person name="Evangelista C.C."/>
            <person name="Ferraz C."/>
            <person name="Ferriera S."/>
            <person name="Fleischmann W."/>
            <person name="Fosler C."/>
            <person name="Gabrielian A.E."/>
            <person name="Garg N.S."/>
            <person name="Gelbart W.M."/>
            <person name="Glasser K."/>
            <person name="Glodek A."/>
            <person name="Gong F."/>
            <person name="Gorrell J.H."/>
            <person name="Gu Z."/>
            <person name="Guan P."/>
            <person name="Harris M."/>
            <person name="Harris N.L."/>
            <person name="Harvey D.A."/>
            <person name="Heiman T.J."/>
            <person name="Hernandez J.R."/>
            <person name="Houck J."/>
            <person name="Hostin D."/>
            <person name="Houston K.A."/>
            <person name="Howland T.J."/>
            <person name="Wei M.-H."/>
            <person name="Ibegwam C."/>
            <person name="Jalali M."/>
            <person name="Kalush F."/>
            <person name="Karpen G.H."/>
            <person name="Ke Z."/>
            <person name="Kennison J.A."/>
            <person name="Ketchum K.A."/>
            <person name="Kimmel B.E."/>
            <person name="Kodira C.D."/>
            <person name="Kraft C.L."/>
            <person name="Kravitz S."/>
            <person name="Kulp D."/>
            <person name="Lai Z."/>
            <person name="Lasko P."/>
            <person name="Lei Y."/>
            <person name="Levitsky A.A."/>
            <person name="Li J.H."/>
            <person name="Li Z."/>
            <person name="Liang Y."/>
            <person name="Lin X."/>
            <person name="Liu X."/>
            <person name="Mattei B."/>
            <person name="McIntosh T.C."/>
            <person name="McLeod M.P."/>
            <person name="McPherson D."/>
            <person name="Merkulov G."/>
            <person name="Milshina N.V."/>
            <person name="Mobarry C."/>
            <person name="Morris J."/>
            <person name="Moshrefi A."/>
            <person name="Mount S.M."/>
            <person name="Moy M."/>
            <person name="Murphy B."/>
            <person name="Murphy L."/>
            <person name="Muzny D.M."/>
            <person name="Nelson D.L."/>
            <person name="Nelson D.R."/>
            <person name="Nelson K.A."/>
            <person name="Nixon K."/>
            <person name="Nusskern D.R."/>
            <person name="Pacleb J.M."/>
            <person name="Palazzolo M."/>
            <person name="Pittman G.S."/>
            <person name="Pan S."/>
            <person name="Pollard J."/>
            <person name="Puri V."/>
            <person name="Reese M.G."/>
            <person name="Reinert K."/>
            <person name="Remington K."/>
            <person name="Saunders R.D.C."/>
            <person name="Scheeler F."/>
            <person name="Shen H."/>
            <person name="Shue B.C."/>
            <person name="Siden-Kiamos I."/>
            <person name="Simpson M."/>
            <person name="Skupski M.P."/>
            <person name="Smith T.J."/>
            <person name="Spier E."/>
            <person name="Spradling A.C."/>
            <person name="Stapleton M."/>
            <person name="Strong R."/>
            <person name="Sun E."/>
            <person name="Svirskas R."/>
            <person name="Tector C."/>
            <person name="Turner R."/>
            <person name="Venter E."/>
            <person name="Wang A.H."/>
            <person name="Wang X."/>
            <person name="Wang Z.-Y."/>
            <person name="Wassarman D.A."/>
            <person name="Weinstock G.M."/>
            <person name="Weissenbach J."/>
            <person name="Williams S.M."/>
            <person name="Woodage T."/>
            <person name="Worley K.C."/>
            <person name="Wu D."/>
            <person name="Yang S."/>
            <person name="Yao Q.A."/>
            <person name="Ye J."/>
            <person name="Yeh R.-F."/>
            <person name="Zaveri J.S."/>
            <person name="Zhan M."/>
            <person name="Zhang G."/>
            <person name="Zhao Q."/>
            <person name="Zheng L."/>
            <person name="Zheng X.H."/>
            <person name="Zhong F.N."/>
            <person name="Zhong W."/>
            <person name="Zhou X."/>
            <person name="Zhu S.C."/>
            <person name="Zhu X."/>
            <person name="Smith H.O."/>
            <person name="Gibbs R.A."/>
            <person name="Myers E.W."/>
            <person name="Rubin G.M."/>
            <person name="Venter J.C."/>
        </authorList>
    </citation>
    <scope>NUCLEOTIDE SEQUENCE [LARGE SCALE GENOMIC DNA]</scope>
    <source>
        <strain>Berkeley</strain>
    </source>
</reference>
<reference key="3">
    <citation type="journal article" date="2002" name="Genome Biol.">
        <title>Annotation of the Drosophila melanogaster euchromatic genome: a systematic review.</title>
        <authorList>
            <person name="Misra S."/>
            <person name="Crosby M.A."/>
            <person name="Mungall C.J."/>
            <person name="Matthews B.B."/>
            <person name="Campbell K.S."/>
            <person name="Hradecky P."/>
            <person name="Huang Y."/>
            <person name="Kaminker J.S."/>
            <person name="Millburn G.H."/>
            <person name="Prochnik S.E."/>
            <person name="Smith C.D."/>
            <person name="Tupy J.L."/>
            <person name="Whitfield E.J."/>
            <person name="Bayraktaroglu L."/>
            <person name="Berman B.P."/>
            <person name="Bettencourt B.R."/>
            <person name="Celniker S.E."/>
            <person name="de Grey A.D.N.J."/>
            <person name="Drysdale R.A."/>
            <person name="Harris N.L."/>
            <person name="Richter J."/>
            <person name="Russo S."/>
            <person name="Schroeder A.J."/>
            <person name="Shu S.Q."/>
            <person name="Stapleton M."/>
            <person name="Yamada C."/>
            <person name="Ashburner M."/>
            <person name="Gelbart W.M."/>
            <person name="Rubin G.M."/>
            <person name="Lewis S.E."/>
        </authorList>
    </citation>
    <scope>GENOME REANNOTATION</scope>
    <source>
        <strain>Berkeley</strain>
    </source>
</reference>
<evidence type="ECO:0000255" key="1">
    <source>
        <dbReference type="PROSITE-ProRule" id="PRU00089"/>
    </source>
</evidence>
<evidence type="ECO:0000256" key="2">
    <source>
        <dbReference type="SAM" id="MobiDB-lite"/>
    </source>
</evidence>
<gene>
    <name type="primary">slp1</name>
    <name type="synonym">FD6</name>
    <name type="ORF">CG16738</name>
</gene>
<keyword id="KW-0217">Developmental protein</keyword>
<keyword id="KW-0238">DNA-binding</keyword>
<keyword id="KW-0539">Nucleus</keyword>
<keyword id="KW-0562">Pair-rule protein</keyword>
<keyword id="KW-1185">Reference proteome</keyword>
<keyword id="KW-0804">Transcription</keyword>
<keyword id="KW-0805">Transcription regulation</keyword>
<comment type="function">
    <text>Transcription factor involved in segmentation. Required for the formation of the mandibular lobe. Different levels of slp activity seem to be required in different segments.</text>
</comment>
<comment type="subcellular location">
    <subcellularLocation>
        <location>Nucleus</location>
    </subcellularLocation>
</comment>
<comment type="tissue specificity">
    <text>Expressed in the posterior half of each parasegment just anterior to the parasegmental boundary.</text>
</comment>
<comment type="developmental stage">
    <text>Present at 0-3 hours of embryogenesis. Maximal expression at 3-6 hours. Strong re-expression in first-instar larvae.</text>
</comment>
<protein>
    <recommendedName>
        <fullName>Fork head domain transcription factor slp1</fullName>
    </recommendedName>
    <alternativeName>
        <fullName>Sloppy paired locus protein 1</fullName>
    </alternativeName>
</protein>
<proteinExistence type="evidence at transcript level"/>
<name>SLP1_DROME</name>
<feature type="chain" id="PRO_0000091914" description="Fork head domain transcription factor slp1">
    <location>
        <begin position="1"/>
        <end position="322"/>
    </location>
</feature>
<feature type="DNA-binding region" description="Fork-head" evidence="1">
    <location>
        <begin position="119"/>
        <end position="210"/>
    </location>
</feature>
<feature type="region of interest" description="Disordered" evidence="2">
    <location>
        <begin position="31"/>
        <end position="81"/>
    </location>
</feature>
<feature type="region of interest" description="Disordered" evidence="2">
    <location>
        <begin position="94"/>
        <end position="120"/>
    </location>
</feature>
<feature type="compositionally biased region" description="Polar residues" evidence="2">
    <location>
        <begin position="61"/>
        <end position="80"/>
    </location>
</feature>
<feature type="compositionally biased region" description="Acidic residues" evidence="2">
    <location>
        <begin position="94"/>
        <end position="103"/>
    </location>
</feature>
<feature type="sequence variant" description="In strain: Oregon-R and Berkeley.">
    <original>P</original>
    <variation>S</variation>
    <location>
        <position position="246"/>
    </location>
</feature>
<feature type="sequence variant" description="In strain: Oregon-R and Berkeley.">
    <original>P</original>
    <variation>Q</variation>
    <location>
        <position position="303"/>
    </location>
</feature>
<organism>
    <name type="scientific">Drosophila melanogaster</name>
    <name type="common">Fruit fly</name>
    <dbReference type="NCBI Taxonomy" id="7227"/>
    <lineage>
        <taxon>Eukaryota</taxon>
        <taxon>Metazoa</taxon>
        <taxon>Ecdysozoa</taxon>
        <taxon>Arthropoda</taxon>
        <taxon>Hexapoda</taxon>
        <taxon>Insecta</taxon>
        <taxon>Pterygota</taxon>
        <taxon>Neoptera</taxon>
        <taxon>Endopterygota</taxon>
        <taxon>Diptera</taxon>
        <taxon>Brachycera</taxon>
        <taxon>Muscomorpha</taxon>
        <taxon>Ephydroidea</taxon>
        <taxon>Drosophilidae</taxon>
        <taxon>Drosophila</taxon>
        <taxon>Sophophora</taxon>
    </lineage>
</organism>
<accession>P32030</accession>
<accession>Q9VQV4</accession>
<sequence length="322" mass="36202">MVKSEMEFKSNFSIDAILAKKPINTATQPIKTEPVHHHHQYVHPYSNSDGELSASEDFDSPSRTSTPMSSAAESLSSQNNDKLDVEFDDELEDQLDEDQESEDGNPSKKQKMTAGSDTKKPPYSYNALIMMAIQDSPEQRLTLNGIYQYLINRFPYFKANKRGWQNSIRHNLSLNKCFTKIPRSYDDPGKGNYWILDPSAEEVFIGETTGKLRRKNPGASRTRLAAYRQAIFSPMMAASPYGAPAPSYGYPAVPFAAAAAAALYQRMNPAAYQAAYQQMQYQQAPQAHHHQAPHPAQMQGYPPQLNAELFQRMQFFGKFPSS</sequence>